<evidence type="ECO:0000250" key="1"/>
<evidence type="ECO:0000250" key="2">
    <source>
        <dbReference type="UniProtKB" id="Q99MZ7"/>
    </source>
</evidence>
<evidence type="ECO:0000250" key="3">
    <source>
        <dbReference type="UniProtKB" id="Q9BY49"/>
    </source>
</evidence>
<evidence type="ECO:0000250" key="4">
    <source>
        <dbReference type="UniProtKB" id="Q9JIF5"/>
    </source>
</evidence>
<evidence type="ECO:0000305" key="5"/>
<keyword id="KW-0275">Fatty acid biosynthesis</keyword>
<keyword id="KW-0276">Fatty acid metabolism</keyword>
<keyword id="KW-0444">Lipid biosynthesis</keyword>
<keyword id="KW-0443">Lipid metabolism</keyword>
<keyword id="KW-0521">NADP</keyword>
<keyword id="KW-0560">Oxidoreductase</keyword>
<keyword id="KW-0576">Peroxisome</keyword>
<keyword id="KW-0597">Phosphoprotein</keyword>
<keyword id="KW-1185">Reference proteome</keyword>
<sequence length="303" mass="32589">MASWAKGRSYLAPGLLQGQVAIVTGGATGIGKAIVKELLELGSNVVIASRKLERLKSAAGELQANLPPTKQARVIPIQCNIRNEEEVNNLVKSTLDIFGKINFLVNNGGGQFLSLAEHISSKGWHAVLETNLTGTFYMCKAVYSSWMKEHGGSIVNIIVSIKTGLPLAVHSGAARAGVYNLTKSLALEWACSGVRINCVAPGVIYSQTAVENYGSYGQSFFEESFQKIPAKRIGVPEEVSSVVCFLLSPAASFITGQSVDVDGGRSLYTHSYEIPDHDNWPKGAGDLSVVKRMKETFKEKAKL</sequence>
<protein>
    <recommendedName>
        <fullName evidence="5">Peroxisomal trans-2-enoyl-CoA reductase</fullName>
        <shortName>TERP</shortName>
        <ecNumber evidence="4">1.3.1.38</ecNumber>
    </recommendedName>
</protein>
<name>PECR_PONAB</name>
<comment type="function">
    <text evidence="4">Participates in chain elongation of fatty acids. Catalyzes the reduction of trans-2-enoyl-CoAs of varying chain lengths from 6:1 to 16:1, having maximum activity with 10:1 CoA. Has no 2,4-dienoyl-CoA reductase activity.</text>
</comment>
<comment type="catalytic activity">
    <reaction evidence="4">
        <text>a (2E)-enoyl-CoA + NADPH + H(+) = a 2,3-saturated acyl-CoA + NADP(+)</text>
        <dbReference type="Rhea" id="RHEA:33763"/>
        <dbReference type="ChEBI" id="CHEBI:15378"/>
        <dbReference type="ChEBI" id="CHEBI:57783"/>
        <dbReference type="ChEBI" id="CHEBI:58349"/>
        <dbReference type="ChEBI" id="CHEBI:58856"/>
        <dbReference type="ChEBI" id="CHEBI:65111"/>
        <dbReference type="EC" id="1.3.1.38"/>
    </reaction>
    <physiologicalReaction direction="left-to-right" evidence="4">
        <dbReference type="Rhea" id="RHEA:33764"/>
    </physiologicalReaction>
</comment>
<comment type="catalytic activity">
    <reaction evidence="4">
        <text>(2E)-hexenoyl-CoA + NADPH + H(+) = hexanoyl-CoA + NADP(+)</text>
        <dbReference type="Rhea" id="RHEA:44956"/>
        <dbReference type="ChEBI" id="CHEBI:15378"/>
        <dbReference type="ChEBI" id="CHEBI:57783"/>
        <dbReference type="ChEBI" id="CHEBI:58349"/>
        <dbReference type="ChEBI" id="CHEBI:62077"/>
        <dbReference type="ChEBI" id="CHEBI:62620"/>
    </reaction>
    <physiologicalReaction direction="left-to-right" evidence="4">
        <dbReference type="Rhea" id="RHEA:44957"/>
    </physiologicalReaction>
</comment>
<comment type="catalytic activity">
    <reaction evidence="4">
        <text>(2E)-octenoyl-CoA + NADPH + H(+) = octanoyl-CoA + NADP(+)</text>
        <dbReference type="Rhea" id="RHEA:44952"/>
        <dbReference type="ChEBI" id="CHEBI:15378"/>
        <dbReference type="ChEBI" id="CHEBI:57386"/>
        <dbReference type="ChEBI" id="CHEBI:57783"/>
        <dbReference type="ChEBI" id="CHEBI:58349"/>
        <dbReference type="ChEBI" id="CHEBI:62242"/>
    </reaction>
    <physiologicalReaction direction="left-to-right" evidence="4">
        <dbReference type="Rhea" id="RHEA:44953"/>
    </physiologicalReaction>
</comment>
<comment type="catalytic activity">
    <reaction evidence="4">
        <text>(2E)-decenoyl-CoA + NADPH + H(+) = decanoyl-CoA + NADP(+)</text>
        <dbReference type="Rhea" id="RHEA:44960"/>
        <dbReference type="ChEBI" id="CHEBI:15378"/>
        <dbReference type="ChEBI" id="CHEBI:57783"/>
        <dbReference type="ChEBI" id="CHEBI:58349"/>
        <dbReference type="ChEBI" id="CHEBI:61406"/>
        <dbReference type="ChEBI" id="CHEBI:61430"/>
    </reaction>
    <physiologicalReaction direction="left-to-right" evidence="4">
        <dbReference type="Rhea" id="RHEA:44961"/>
    </physiologicalReaction>
</comment>
<comment type="catalytic activity">
    <reaction evidence="4">
        <text>(2E)-dodecenoyl-CoA + NADPH + H(+) = dodecanoyl-CoA + NADP(+)</text>
        <dbReference type="Rhea" id="RHEA:44964"/>
        <dbReference type="ChEBI" id="CHEBI:15378"/>
        <dbReference type="ChEBI" id="CHEBI:57330"/>
        <dbReference type="ChEBI" id="CHEBI:57375"/>
        <dbReference type="ChEBI" id="CHEBI:57783"/>
        <dbReference type="ChEBI" id="CHEBI:58349"/>
    </reaction>
    <physiologicalReaction direction="left-to-right" evidence="4">
        <dbReference type="Rhea" id="RHEA:44965"/>
    </physiologicalReaction>
</comment>
<comment type="catalytic activity">
    <reaction evidence="4">
        <text>(2E)-tetradecenoyl-CoA + NADPH + H(+) = tetradecanoyl-CoA + NADP(+)</text>
        <dbReference type="Rhea" id="RHEA:44968"/>
        <dbReference type="ChEBI" id="CHEBI:15378"/>
        <dbReference type="ChEBI" id="CHEBI:57385"/>
        <dbReference type="ChEBI" id="CHEBI:57783"/>
        <dbReference type="ChEBI" id="CHEBI:58349"/>
        <dbReference type="ChEBI" id="CHEBI:61405"/>
    </reaction>
    <physiologicalReaction direction="left-to-right" evidence="4">
        <dbReference type="Rhea" id="RHEA:44969"/>
    </physiologicalReaction>
</comment>
<comment type="pathway">
    <text evidence="4">Lipid metabolism; fatty acid biosynthesis.</text>
</comment>
<comment type="subunit">
    <text evidence="3">Interacts with PEX5, probably required to target it into peroxisomes.</text>
</comment>
<comment type="subcellular location">
    <subcellularLocation>
        <location evidence="4">Peroxisome</location>
    </subcellularLocation>
</comment>
<comment type="similarity">
    <text evidence="5">Belongs to the short-chain dehydrogenases/reductases (SDR) family.</text>
</comment>
<reference key="1">
    <citation type="submission" date="2004-11" db="EMBL/GenBank/DDBJ databases">
        <authorList>
            <consortium name="The German cDNA consortium"/>
        </authorList>
    </citation>
    <scope>NUCLEOTIDE SEQUENCE [LARGE SCALE MRNA]</scope>
    <source>
        <tissue>Kidney</tissue>
    </source>
</reference>
<accession>Q5RCH8</accession>
<proteinExistence type="evidence at transcript level"/>
<dbReference type="EC" id="1.3.1.38" evidence="4"/>
<dbReference type="EMBL" id="CR858292">
    <property type="protein sequence ID" value="CAH90529.1"/>
    <property type="molecule type" value="mRNA"/>
</dbReference>
<dbReference type="RefSeq" id="NP_001127299.1">
    <property type="nucleotide sequence ID" value="NM_001133827.2"/>
</dbReference>
<dbReference type="SMR" id="Q5RCH8"/>
<dbReference type="FunCoup" id="Q5RCH8">
    <property type="interactions" value="350"/>
</dbReference>
<dbReference type="STRING" id="9601.ENSPPYP00000014695"/>
<dbReference type="GeneID" id="100174357"/>
<dbReference type="KEGG" id="pon:100174357"/>
<dbReference type="CTD" id="55825"/>
<dbReference type="eggNOG" id="KOG0725">
    <property type="taxonomic scope" value="Eukaryota"/>
</dbReference>
<dbReference type="HOGENOM" id="CLU_010194_1_2_1"/>
<dbReference type="InParanoid" id="Q5RCH8"/>
<dbReference type="OrthoDB" id="417891at2759"/>
<dbReference type="UniPathway" id="UPA00094"/>
<dbReference type="Proteomes" id="UP000001595">
    <property type="component" value="Unplaced"/>
</dbReference>
<dbReference type="GO" id="GO:0005777">
    <property type="term" value="C:peroxisome"/>
    <property type="evidence" value="ECO:0007669"/>
    <property type="project" value="UniProtKB-SubCell"/>
</dbReference>
<dbReference type="GO" id="GO:0019166">
    <property type="term" value="F:trans-2-enoyl-CoA reductase (NADPH) activity"/>
    <property type="evidence" value="ECO:0007669"/>
    <property type="project" value="UniProtKB-EC"/>
</dbReference>
<dbReference type="GO" id="GO:0006633">
    <property type="term" value="P:fatty acid biosynthetic process"/>
    <property type="evidence" value="ECO:0007669"/>
    <property type="project" value="UniProtKB-UniPathway"/>
</dbReference>
<dbReference type="GO" id="GO:0033306">
    <property type="term" value="P:phytol metabolic process"/>
    <property type="evidence" value="ECO:0007669"/>
    <property type="project" value="TreeGrafter"/>
</dbReference>
<dbReference type="CDD" id="cd05369">
    <property type="entry name" value="TER_DECR_SDR_a"/>
    <property type="match status" value="1"/>
</dbReference>
<dbReference type="FunFam" id="3.40.50.720:FF:000335">
    <property type="entry name" value="Peroxisomal trans-2-enoyl-CoA reductase"/>
    <property type="match status" value="1"/>
</dbReference>
<dbReference type="Gene3D" id="3.40.50.720">
    <property type="entry name" value="NAD(P)-binding Rossmann-like Domain"/>
    <property type="match status" value="1"/>
</dbReference>
<dbReference type="InterPro" id="IPR036291">
    <property type="entry name" value="NAD(P)-bd_dom_sf"/>
</dbReference>
<dbReference type="InterPro" id="IPR052388">
    <property type="entry name" value="Peroxisomal_t2-enoyl-CoA_red"/>
</dbReference>
<dbReference type="InterPro" id="IPR002347">
    <property type="entry name" value="SDR_fam"/>
</dbReference>
<dbReference type="PANTHER" id="PTHR24317">
    <property type="entry name" value="PEROXISOMAL TRANS-2-ENOYL-COA REDUCTASE"/>
    <property type="match status" value="1"/>
</dbReference>
<dbReference type="PANTHER" id="PTHR24317:SF7">
    <property type="entry name" value="PEROXISOMAL TRANS-2-ENOYL-COA REDUCTASE"/>
    <property type="match status" value="1"/>
</dbReference>
<dbReference type="Pfam" id="PF13561">
    <property type="entry name" value="adh_short_C2"/>
    <property type="match status" value="1"/>
</dbReference>
<dbReference type="PRINTS" id="PR00081">
    <property type="entry name" value="GDHRDH"/>
</dbReference>
<dbReference type="PRINTS" id="PR00080">
    <property type="entry name" value="SDRFAMILY"/>
</dbReference>
<dbReference type="SUPFAM" id="SSF51735">
    <property type="entry name" value="NAD(P)-binding Rossmann-fold domains"/>
    <property type="match status" value="1"/>
</dbReference>
<feature type="chain" id="PRO_0000054742" description="Peroxisomal trans-2-enoyl-CoA reductase">
    <location>
        <begin position="1"/>
        <end position="303"/>
    </location>
</feature>
<feature type="short sequence motif" description="Microbody targeting signal" evidence="1">
    <location>
        <begin position="301"/>
        <end position="303"/>
    </location>
</feature>
<feature type="active site" description="Proton acceptor" evidence="1">
    <location>
        <position position="179"/>
    </location>
</feature>
<feature type="binding site" evidence="1">
    <location>
        <begin position="23"/>
        <end position="47"/>
    </location>
    <ligand>
        <name>NADP(+)</name>
        <dbReference type="ChEBI" id="CHEBI:58349"/>
    </ligand>
</feature>
<feature type="modified residue" description="N6-succinyllysine" evidence="2">
    <location>
        <position position="32"/>
    </location>
</feature>
<feature type="modified residue" description="Phosphoserine" evidence="3">
    <location>
        <position position="49"/>
    </location>
</feature>
<feature type="modified residue" description="Phosphotyrosine" evidence="3">
    <location>
        <position position="179"/>
    </location>
</feature>
<gene>
    <name type="primary">PECR</name>
</gene>
<organism>
    <name type="scientific">Pongo abelii</name>
    <name type="common">Sumatran orangutan</name>
    <name type="synonym">Pongo pygmaeus abelii</name>
    <dbReference type="NCBI Taxonomy" id="9601"/>
    <lineage>
        <taxon>Eukaryota</taxon>
        <taxon>Metazoa</taxon>
        <taxon>Chordata</taxon>
        <taxon>Craniata</taxon>
        <taxon>Vertebrata</taxon>
        <taxon>Euteleostomi</taxon>
        <taxon>Mammalia</taxon>
        <taxon>Eutheria</taxon>
        <taxon>Euarchontoglires</taxon>
        <taxon>Primates</taxon>
        <taxon>Haplorrhini</taxon>
        <taxon>Catarrhini</taxon>
        <taxon>Hominidae</taxon>
        <taxon>Pongo</taxon>
    </lineage>
</organism>